<comment type="function">
    <text evidence="1">May function in a SRP (signal recognition particle) and GET (guided entry of tail-anchored proteins) independent pathway for targeting a broad range of substrate proteins to the endoplasmic reticulum. Involved in inorganic phosphate uptake. Also involved in telomere length regulation and maintenance (By similarity).</text>
</comment>
<comment type="subcellular location">
    <subcellularLocation>
        <location evidence="3">Endoplasmic reticulum membrane</location>
        <topology evidence="2">Multi-pass membrane protein</topology>
    </subcellularLocation>
</comment>
<comment type="similarity">
    <text evidence="4">Belongs to the PHO88 family.</text>
</comment>
<keyword id="KW-0256">Endoplasmic reticulum</keyword>
<keyword id="KW-0472">Membrane</keyword>
<keyword id="KW-0592">Phosphate transport</keyword>
<keyword id="KW-1185">Reference proteome</keyword>
<keyword id="KW-0812">Transmembrane</keyword>
<keyword id="KW-1133">Transmembrane helix</keyword>
<keyword id="KW-0813">Transport</keyword>
<dbReference type="EMBL" id="CU329671">
    <property type="protein sequence ID" value="CAA17902.2"/>
    <property type="molecule type" value="Genomic_DNA"/>
</dbReference>
<dbReference type="PIR" id="T39622">
    <property type="entry name" value="T39622"/>
</dbReference>
<dbReference type="BioGRID" id="276618">
    <property type="interactions" value="4"/>
</dbReference>
<dbReference type="FunCoup" id="O42940">
    <property type="interactions" value="118"/>
</dbReference>
<dbReference type="STRING" id="284812.O42940"/>
<dbReference type="PaxDb" id="4896-SPBC16H5.04.1"/>
<dbReference type="EnsemblFungi" id="SPBC16H5.04.1">
    <property type="protein sequence ID" value="SPBC16H5.04.1:pep"/>
    <property type="gene ID" value="SPBC16H5.04"/>
</dbReference>
<dbReference type="KEGG" id="spo:2540080"/>
<dbReference type="PomBase" id="SPBC16H5.04"/>
<dbReference type="VEuPathDB" id="FungiDB:SPBC16H5.04"/>
<dbReference type="eggNOG" id="KOG4554">
    <property type="taxonomic scope" value="Eukaryota"/>
</dbReference>
<dbReference type="HOGENOM" id="CLU_099163_0_0_1"/>
<dbReference type="InParanoid" id="O42940"/>
<dbReference type="OMA" id="EPASQSW"/>
<dbReference type="PhylomeDB" id="O42940"/>
<dbReference type="PRO" id="PR:O42940"/>
<dbReference type="Proteomes" id="UP000002485">
    <property type="component" value="Chromosome II"/>
</dbReference>
<dbReference type="GO" id="GO:0005789">
    <property type="term" value="C:endoplasmic reticulum membrane"/>
    <property type="evidence" value="ECO:0000266"/>
    <property type="project" value="PomBase"/>
</dbReference>
<dbReference type="GO" id="GO:0006817">
    <property type="term" value="P:phosphate ion transport"/>
    <property type="evidence" value="ECO:0007669"/>
    <property type="project" value="UniProtKB-KW"/>
</dbReference>
<dbReference type="GO" id="GO:0045048">
    <property type="term" value="P:protein insertion into ER membrane"/>
    <property type="evidence" value="ECO:0000266"/>
    <property type="project" value="PomBase"/>
</dbReference>
<dbReference type="GO" id="GO:0045047">
    <property type="term" value="P:protein targeting to ER"/>
    <property type="evidence" value="ECO:0000266"/>
    <property type="project" value="PomBase"/>
</dbReference>
<dbReference type="InterPro" id="IPR012098">
    <property type="entry name" value="SND3_fun"/>
</dbReference>
<dbReference type="PANTHER" id="PTHR28112">
    <property type="entry name" value="SRP-INDEPENDENT TARGETING PROTEIN 3"/>
    <property type="match status" value="1"/>
</dbReference>
<dbReference type="PANTHER" id="PTHR28112:SF1">
    <property type="entry name" value="SRP-INDEPENDENT TARGETING PROTEIN 3"/>
    <property type="match status" value="1"/>
</dbReference>
<dbReference type="Pfam" id="PF10032">
    <property type="entry name" value="Pho88"/>
    <property type="match status" value="1"/>
</dbReference>
<dbReference type="PIRSF" id="PIRSF008756">
    <property type="entry name" value="P_tr_PHO88"/>
    <property type="match status" value="1"/>
</dbReference>
<reference key="1">
    <citation type="journal article" date="2002" name="Nature">
        <title>The genome sequence of Schizosaccharomyces pombe.</title>
        <authorList>
            <person name="Wood V."/>
            <person name="Gwilliam R."/>
            <person name="Rajandream M.A."/>
            <person name="Lyne M.H."/>
            <person name="Lyne R."/>
            <person name="Stewart A."/>
            <person name="Sgouros J.G."/>
            <person name="Peat N."/>
            <person name="Hayles J."/>
            <person name="Baker S.G."/>
            <person name="Basham D."/>
            <person name="Bowman S."/>
            <person name="Brooks K."/>
            <person name="Brown D."/>
            <person name="Brown S."/>
            <person name="Chillingworth T."/>
            <person name="Churcher C.M."/>
            <person name="Collins M."/>
            <person name="Connor R."/>
            <person name="Cronin A."/>
            <person name="Davis P."/>
            <person name="Feltwell T."/>
            <person name="Fraser A."/>
            <person name="Gentles S."/>
            <person name="Goble A."/>
            <person name="Hamlin N."/>
            <person name="Harris D.E."/>
            <person name="Hidalgo J."/>
            <person name="Hodgson G."/>
            <person name="Holroyd S."/>
            <person name="Hornsby T."/>
            <person name="Howarth S."/>
            <person name="Huckle E.J."/>
            <person name="Hunt S."/>
            <person name="Jagels K."/>
            <person name="James K.D."/>
            <person name="Jones L."/>
            <person name="Jones M."/>
            <person name="Leather S."/>
            <person name="McDonald S."/>
            <person name="McLean J."/>
            <person name="Mooney P."/>
            <person name="Moule S."/>
            <person name="Mungall K.L."/>
            <person name="Murphy L.D."/>
            <person name="Niblett D."/>
            <person name="Odell C."/>
            <person name="Oliver K."/>
            <person name="O'Neil S."/>
            <person name="Pearson D."/>
            <person name="Quail M.A."/>
            <person name="Rabbinowitsch E."/>
            <person name="Rutherford K.M."/>
            <person name="Rutter S."/>
            <person name="Saunders D."/>
            <person name="Seeger K."/>
            <person name="Sharp S."/>
            <person name="Skelton J."/>
            <person name="Simmonds M.N."/>
            <person name="Squares R."/>
            <person name="Squares S."/>
            <person name="Stevens K."/>
            <person name="Taylor K."/>
            <person name="Taylor R.G."/>
            <person name="Tivey A."/>
            <person name="Walsh S.V."/>
            <person name="Warren T."/>
            <person name="Whitehead S."/>
            <person name="Woodward J.R."/>
            <person name="Volckaert G."/>
            <person name="Aert R."/>
            <person name="Robben J."/>
            <person name="Grymonprez B."/>
            <person name="Weltjens I."/>
            <person name="Vanstreels E."/>
            <person name="Rieger M."/>
            <person name="Schaefer M."/>
            <person name="Mueller-Auer S."/>
            <person name="Gabel C."/>
            <person name="Fuchs M."/>
            <person name="Duesterhoeft A."/>
            <person name="Fritzc C."/>
            <person name="Holzer E."/>
            <person name="Moestl D."/>
            <person name="Hilbert H."/>
            <person name="Borzym K."/>
            <person name="Langer I."/>
            <person name="Beck A."/>
            <person name="Lehrach H."/>
            <person name="Reinhardt R."/>
            <person name="Pohl T.M."/>
            <person name="Eger P."/>
            <person name="Zimmermann W."/>
            <person name="Wedler H."/>
            <person name="Wambutt R."/>
            <person name="Purnelle B."/>
            <person name="Goffeau A."/>
            <person name="Cadieu E."/>
            <person name="Dreano S."/>
            <person name="Gloux S."/>
            <person name="Lelaure V."/>
            <person name="Mottier S."/>
            <person name="Galibert F."/>
            <person name="Aves S.J."/>
            <person name="Xiang Z."/>
            <person name="Hunt C."/>
            <person name="Moore K."/>
            <person name="Hurst S.M."/>
            <person name="Lucas M."/>
            <person name="Rochet M."/>
            <person name="Gaillardin C."/>
            <person name="Tallada V.A."/>
            <person name="Garzon A."/>
            <person name="Thode G."/>
            <person name="Daga R.R."/>
            <person name="Cruzado L."/>
            <person name="Jimenez J."/>
            <person name="Sanchez M."/>
            <person name="del Rey F."/>
            <person name="Benito J."/>
            <person name="Dominguez A."/>
            <person name="Revuelta J.L."/>
            <person name="Moreno S."/>
            <person name="Armstrong J."/>
            <person name="Forsburg S.L."/>
            <person name="Cerutti L."/>
            <person name="Lowe T."/>
            <person name="McCombie W.R."/>
            <person name="Paulsen I."/>
            <person name="Potashkin J."/>
            <person name="Shpakovski G.V."/>
            <person name="Ussery D."/>
            <person name="Barrell B.G."/>
            <person name="Nurse P."/>
        </authorList>
    </citation>
    <scope>NUCLEOTIDE SEQUENCE [LARGE SCALE GENOMIC DNA]</scope>
    <source>
        <strain>972 / ATCC 24843</strain>
    </source>
</reference>
<reference key="2">
    <citation type="journal article" date="2006" name="Nat. Biotechnol.">
        <title>ORFeome cloning and global analysis of protein localization in the fission yeast Schizosaccharomyces pombe.</title>
        <authorList>
            <person name="Matsuyama A."/>
            <person name="Arai R."/>
            <person name="Yashiroda Y."/>
            <person name="Shirai A."/>
            <person name="Kamata A."/>
            <person name="Sekido S."/>
            <person name="Kobayashi Y."/>
            <person name="Hashimoto A."/>
            <person name="Hamamoto M."/>
            <person name="Hiraoka Y."/>
            <person name="Horinouchi S."/>
            <person name="Yoshida M."/>
        </authorList>
    </citation>
    <scope>SUBCELLULAR LOCATION [LARGE SCALE ANALYSIS]</scope>
</reference>
<proteinExistence type="inferred from homology"/>
<accession>O42940</accession>
<evidence type="ECO:0000250" key="1">
    <source>
        <dbReference type="UniProtKB" id="P38264"/>
    </source>
</evidence>
<evidence type="ECO:0000255" key="2"/>
<evidence type="ECO:0000269" key="3">
    <source>
    </source>
</evidence>
<evidence type="ECO:0000305" key="4"/>
<evidence type="ECO:0000312" key="5">
    <source>
        <dbReference type="PomBase" id="SPBC16H5.04"/>
    </source>
</evidence>
<organism>
    <name type="scientific">Schizosaccharomyces pombe (strain 972 / ATCC 24843)</name>
    <name type="common">Fission yeast</name>
    <dbReference type="NCBI Taxonomy" id="284812"/>
    <lineage>
        <taxon>Eukaryota</taxon>
        <taxon>Fungi</taxon>
        <taxon>Dikarya</taxon>
        <taxon>Ascomycota</taxon>
        <taxon>Taphrinomycotina</taxon>
        <taxon>Schizosaccharomycetes</taxon>
        <taxon>Schizosaccharomycetales</taxon>
        <taxon>Schizosaccharomycetaceae</taxon>
        <taxon>Schizosaccharomyces</taxon>
    </lineage>
</organism>
<protein>
    <recommendedName>
        <fullName evidence="1">SRP-independent targeting protein 3 homolog</fullName>
    </recommendedName>
    <alternativeName>
        <fullName>Inorganic phosphate transport protein pho88</fullName>
    </alternativeName>
    <alternativeName>
        <fullName>Phosphate metabolism protein pho88</fullName>
    </alternativeName>
</protein>
<sequence length="194" mass="21964">MVSRWEKLKNNPQTKSIGISIFLMMITRVIDFSRPSLLWPLRILYATVNIVQIGIFLYTKIIIEKKNDLTVLKYVEPATPMSGREHSKFVATTVRDYDLSKLLTSFKQMLVTIATTLFMHLYMGYAPPLLLQSVSAARGLFDNSEVQIHVQNKPAIDELRRPFKSSGGLLGSFGQVLTDKKSVDEAELTKLKPT</sequence>
<name>PHO88_SCHPO</name>
<gene>
    <name evidence="1" type="primary">pho88</name>
    <name evidence="5" type="ORF">SPBC16H5.04</name>
</gene>
<feature type="chain" id="PRO_0000372626" description="SRP-independent targeting protein 3 homolog">
    <location>
        <begin position="1"/>
        <end position="194"/>
    </location>
</feature>
<feature type="transmembrane region" description="Helical" evidence="2">
    <location>
        <begin position="43"/>
        <end position="63"/>
    </location>
</feature>
<feature type="transmembrane region" description="Helical" evidence="2">
    <location>
        <begin position="110"/>
        <end position="130"/>
    </location>
</feature>